<protein>
    <recommendedName>
        <fullName>Ribonucleoside-diphosphate reductase 1 subunit beta</fullName>
        <ecNumber>1.17.4.1</ecNumber>
    </recommendedName>
    <alternativeName>
        <fullName>Protein B2</fullName>
    </alternativeName>
    <alternativeName>
        <fullName>Protein R2</fullName>
    </alternativeName>
    <alternativeName>
        <fullName>Ribonucleotide reductase 1</fullName>
    </alternativeName>
</protein>
<comment type="function">
    <text>Provides the precursors necessary for DNA synthesis. Catalyzes the biosynthesis of deoxyribonucleotides from the corresponding ribonucleotides. R2 contains the tyrosyl radical required for catalysis.</text>
</comment>
<comment type="catalytic activity">
    <reaction evidence="2">
        <text>a 2'-deoxyribonucleoside 5'-diphosphate + [thioredoxin]-disulfide + H2O = a ribonucleoside 5'-diphosphate + [thioredoxin]-dithiol</text>
        <dbReference type="Rhea" id="RHEA:23252"/>
        <dbReference type="Rhea" id="RHEA-COMP:10698"/>
        <dbReference type="Rhea" id="RHEA-COMP:10700"/>
        <dbReference type="ChEBI" id="CHEBI:15377"/>
        <dbReference type="ChEBI" id="CHEBI:29950"/>
        <dbReference type="ChEBI" id="CHEBI:50058"/>
        <dbReference type="ChEBI" id="CHEBI:57930"/>
        <dbReference type="ChEBI" id="CHEBI:73316"/>
        <dbReference type="EC" id="1.17.4.1"/>
    </reaction>
</comment>
<comment type="cofactor">
    <cofactor evidence="1">
        <name>Fe cation</name>
        <dbReference type="ChEBI" id="CHEBI:24875"/>
    </cofactor>
    <text evidence="1">Binds 2 iron ions per subunit.</text>
</comment>
<comment type="subunit">
    <text evidence="1">Tetramer of two alpha (R1) and two beta (R2) subunits. The B1 protein is a dimer of alpha subunits. A radical transfer pathway occurs between Tyr-123 of R2 and R1 (By similarity).</text>
</comment>
<comment type="miscellaneous">
    <text evidence="1">A substrate-binding catalytic site, located on R1, is formed only in the presence of the second subunit R2.</text>
</comment>
<comment type="similarity">
    <text evidence="3">Belongs to the ribonucleoside diphosphate reductase small chain family.</text>
</comment>
<evidence type="ECO:0000250" key="1"/>
<evidence type="ECO:0000255" key="2">
    <source>
        <dbReference type="PROSITE-ProRule" id="PRU10014"/>
    </source>
</evidence>
<evidence type="ECO:0000305" key="3"/>
<proteinExistence type="inferred from homology"/>
<sequence length="376" mass="43552">MAYTTFSQTKNDQLKEPMFFGQPVNVARYDQQKYDIFEKLIEKQLSFFWRPEEVDVSRDRIDYQALPEHEKHIFISNLKYQTLLDSIQGRSPNVALLPLISIPELETWVETWAFSETIHSRSYTHIIRNIVNDPAVVFDDIVTNEQIQKRAEGISAYYDELIEMTSYWHLLGEGTHTVNGKTVVVNLRELKKKLYLCLMSVNALEAIRFYVSFACSFAFAERELMEGNAKIIRLIARDEALHLTGTQHMLNLLRSGVDDPEMAEIAEECKQECYDLFVQAAQQEKEWADYLFRDGSMIGLNKDILCQYVEYITNIRMQAVGLDLPFQTRSNPIPWINTWLVSDNVQVAPQEVEVSSYLVGQIDSEVDTDDLSNFQL</sequence>
<keyword id="KW-0215">Deoxyribonucleotide synthesis</keyword>
<keyword id="KW-0408">Iron</keyword>
<keyword id="KW-0479">Metal-binding</keyword>
<keyword id="KW-0560">Oxidoreductase</keyword>
<keyword id="KW-1185">Reference proteome</keyword>
<reference key="1">
    <citation type="journal article" date="2001" name="Nature">
        <title>Complete genome sequence of Salmonella enterica serovar Typhimurium LT2.</title>
        <authorList>
            <person name="McClelland M."/>
            <person name="Sanderson K.E."/>
            <person name="Spieth J."/>
            <person name="Clifton S.W."/>
            <person name="Latreille P."/>
            <person name="Courtney L."/>
            <person name="Porwollik S."/>
            <person name="Ali J."/>
            <person name="Dante M."/>
            <person name="Du F."/>
            <person name="Hou S."/>
            <person name="Layman D."/>
            <person name="Leonard S."/>
            <person name="Nguyen C."/>
            <person name="Scott K."/>
            <person name="Holmes A."/>
            <person name="Grewal N."/>
            <person name="Mulvaney E."/>
            <person name="Ryan E."/>
            <person name="Sun H."/>
            <person name="Florea L."/>
            <person name="Miller W."/>
            <person name="Stoneking T."/>
            <person name="Nhan M."/>
            <person name="Waterston R."/>
            <person name="Wilson R.K."/>
        </authorList>
    </citation>
    <scope>NUCLEOTIDE SEQUENCE [LARGE SCALE GENOMIC DNA]</scope>
    <source>
        <strain>LT2 / SGSC1412 / ATCC 700720</strain>
    </source>
</reference>
<reference key="2">
    <citation type="journal article" date="1994" name="J. Bacteriol.">
        <title>Cloning and sequencing of the genes from Salmonella typhimurium encoding a new bacterial ribonucleotide reductase.</title>
        <authorList>
            <person name="Jordan A."/>
            <person name="Gibert I."/>
            <person name="Barbe J."/>
        </authorList>
    </citation>
    <scope>NUCLEOTIDE SEQUENCE [GENOMIC DNA] OF 1-122</scope>
</reference>
<reference key="3">
    <citation type="submission" date="1994-07" db="EMBL/GenBank/DDBJ databases">
        <authorList>
            <person name="Jordan A."/>
        </authorList>
    </citation>
    <scope>NUCLEOTIDE SEQUENCE [GENOMIC DNA] OF 123-376</scope>
</reference>
<gene>
    <name type="primary">nrdB</name>
    <name type="ordered locus">STM2278</name>
</gene>
<dbReference type="EC" id="1.17.4.1"/>
<dbReference type="EMBL" id="AE006468">
    <property type="protein sequence ID" value="AAL21179.1"/>
    <property type="molecule type" value="Genomic_DNA"/>
</dbReference>
<dbReference type="EMBL" id="X72948">
    <property type="protein sequence ID" value="CAA51453.1"/>
    <property type="molecule type" value="Genomic_DNA"/>
</dbReference>
<dbReference type="PIR" id="S32630">
    <property type="entry name" value="S32630"/>
</dbReference>
<dbReference type="RefSeq" id="NP_461220.1">
    <property type="nucleotide sequence ID" value="NC_003197.2"/>
</dbReference>
<dbReference type="RefSeq" id="WP_000332026.1">
    <property type="nucleotide sequence ID" value="NC_003197.2"/>
</dbReference>
<dbReference type="SMR" id="P37427"/>
<dbReference type="STRING" id="99287.STM2278"/>
<dbReference type="PaxDb" id="99287-STM2278"/>
<dbReference type="GeneID" id="1253800"/>
<dbReference type="KEGG" id="stm:STM2278"/>
<dbReference type="PATRIC" id="fig|99287.12.peg.2411"/>
<dbReference type="HOGENOM" id="CLU_062403_0_0_6"/>
<dbReference type="OMA" id="LEPMFLG"/>
<dbReference type="PhylomeDB" id="P37427"/>
<dbReference type="BioCyc" id="SENT99287:STM2278-MONOMER"/>
<dbReference type="Proteomes" id="UP000001014">
    <property type="component" value="Chromosome"/>
</dbReference>
<dbReference type="GO" id="GO:0046872">
    <property type="term" value="F:metal ion binding"/>
    <property type="evidence" value="ECO:0007669"/>
    <property type="project" value="UniProtKB-KW"/>
</dbReference>
<dbReference type="GO" id="GO:0004748">
    <property type="term" value="F:ribonucleoside-diphosphate reductase activity, thioredoxin disulfide as acceptor"/>
    <property type="evidence" value="ECO:0007669"/>
    <property type="project" value="UniProtKB-EC"/>
</dbReference>
<dbReference type="GO" id="GO:0009263">
    <property type="term" value="P:deoxyribonucleotide biosynthetic process"/>
    <property type="evidence" value="ECO:0007669"/>
    <property type="project" value="UniProtKB-KW"/>
</dbReference>
<dbReference type="CDD" id="cd01049">
    <property type="entry name" value="RNRR2"/>
    <property type="match status" value="1"/>
</dbReference>
<dbReference type="FunFam" id="1.10.620.20:FF:000001">
    <property type="entry name" value="Ribonucleoside-diphosphate reductase 1 subunit beta"/>
    <property type="match status" value="1"/>
</dbReference>
<dbReference type="Gene3D" id="1.10.620.20">
    <property type="entry name" value="Ribonucleotide Reductase, subunit A"/>
    <property type="match status" value="1"/>
</dbReference>
<dbReference type="InterPro" id="IPR009078">
    <property type="entry name" value="Ferritin-like_SF"/>
</dbReference>
<dbReference type="InterPro" id="IPR012348">
    <property type="entry name" value="RNR-like"/>
</dbReference>
<dbReference type="InterPro" id="IPR033909">
    <property type="entry name" value="RNR_small"/>
</dbReference>
<dbReference type="InterPro" id="IPR030475">
    <property type="entry name" value="RNR_small_AS"/>
</dbReference>
<dbReference type="InterPro" id="IPR000358">
    <property type="entry name" value="RNR_small_fam"/>
</dbReference>
<dbReference type="NCBIfam" id="NF006576">
    <property type="entry name" value="PRK09101.1"/>
    <property type="match status" value="1"/>
</dbReference>
<dbReference type="PANTHER" id="PTHR23409">
    <property type="entry name" value="RIBONUCLEOSIDE-DIPHOSPHATE REDUCTASE SMALL CHAIN"/>
    <property type="match status" value="1"/>
</dbReference>
<dbReference type="PANTHER" id="PTHR23409:SF18">
    <property type="entry name" value="RIBONUCLEOSIDE-DIPHOSPHATE REDUCTASE SUBUNIT M2"/>
    <property type="match status" value="1"/>
</dbReference>
<dbReference type="Pfam" id="PF00268">
    <property type="entry name" value="Ribonuc_red_sm"/>
    <property type="match status" value="1"/>
</dbReference>
<dbReference type="SUPFAM" id="SSF47240">
    <property type="entry name" value="Ferritin-like"/>
    <property type="match status" value="1"/>
</dbReference>
<dbReference type="PROSITE" id="PS00368">
    <property type="entry name" value="RIBORED_SMALL"/>
    <property type="match status" value="1"/>
</dbReference>
<feature type="initiator methionine" description="Removed" evidence="1">
    <location>
        <position position="1"/>
    </location>
</feature>
<feature type="chain" id="PRO_0000190478" description="Ribonucleoside-diphosphate reductase 1 subunit beta">
    <location>
        <begin position="2"/>
        <end position="376"/>
    </location>
</feature>
<feature type="active site" evidence="2">
    <location>
        <position position="123"/>
    </location>
</feature>
<feature type="binding site" evidence="2">
    <location>
        <position position="85"/>
    </location>
    <ligand>
        <name>Fe cation</name>
        <dbReference type="ChEBI" id="CHEBI:24875"/>
        <label>1</label>
    </ligand>
</feature>
<feature type="binding site" evidence="2">
    <location>
        <position position="116"/>
    </location>
    <ligand>
        <name>Fe cation</name>
        <dbReference type="ChEBI" id="CHEBI:24875"/>
        <label>1</label>
    </ligand>
</feature>
<feature type="binding site" evidence="1">
    <location>
        <position position="116"/>
    </location>
    <ligand>
        <name>Fe cation</name>
        <dbReference type="ChEBI" id="CHEBI:24875"/>
        <label>2</label>
    </ligand>
</feature>
<feature type="binding site" evidence="2">
    <location>
        <position position="119"/>
    </location>
    <ligand>
        <name>Fe cation</name>
        <dbReference type="ChEBI" id="CHEBI:24875"/>
        <label>1</label>
    </ligand>
</feature>
<feature type="binding site" evidence="1">
    <location>
        <position position="205"/>
    </location>
    <ligand>
        <name>Fe cation</name>
        <dbReference type="ChEBI" id="CHEBI:24875"/>
        <label>2</label>
    </ligand>
</feature>
<feature type="binding site" evidence="1">
    <location>
        <position position="239"/>
    </location>
    <ligand>
        <name>Fe cation</name>
        <dbReference type="ChEBI" id="CHEBI:24875"/>
        <label>2</label>
    </ligand>
</feature>
<feature type="binding site" evidence="1">
    <location>
        <position position="242"/>
    </location>
    <ligand>
        <name>Fe cation</name>
        <dbReference type="ChEBI" id="CHEBI:24875"/>
        <label>2</label>
    </ligand>
</feature>
<organism>
    <name type="scientific">Salmonella typhimurium (strain LT2 / SGSC1412 / ATCC 700720)</name>
    <dbReference type="NCBI Taxonomy" id="99287"/>
    <lineage>
        <taxon>Bacteria</taxon>
        <taxon>Pseudomonadati</taxon>
        <taxon>Pseudomonadota</taxon>
        <taxon>Gammaproteobacteria</taxon>
        <taxon>Enterobacterales</taxon>
        <taxon>Enterobacteriaceae</taxon>
        <taxon>Salmonella</taxon>
    </lineage>
</organism>
<accession>P37427</accession>
<name>RIR2_SALTY</name>